<comment type="function">
    <text evidence="1">Involved in the oxidation of myo-inositol (MI) to 2-keto-myo-inositol (2KMI or 2-inosose).</text>
</comment>
<comment type="catalytic activity">
    <reaction>
        <text>myo-inositol + NAD(+) = scyllo-inosose + NADH + H(+)</text>
        <dbReference type="Rhea" id="RHEA:16949"/>
        <dbReference type="ChEBI" id="CHEBI:15378"/>
        <dbReference type="ChEBI" id="CHEBI:17268"/>
        <dbReference type="ChEBI" id="CHEBI:17811"/>
        <dbReference type="ChEBI" id="CHEBI:57540"/>
        <dbReference type="ChEBI" id="CHEBI:57945"/>
        <dbReference type="EC" id="1.1.1.18"/>
    </reaction>
</comment>
<comment type="pathway">
    <text>Polyol metabolism; myo-inositol degradation into acetyl-CoA; acetyl-CoA from myo-inositol: step 1/7.</text>
</comment>
<comment type="induction">
    <text evidence="1">By myo-inositol.</text>
</comment>
<comment type="similarity">
    <text evidence="2">Belongs to the Gfo/Idh/MocA family.</text>
</comment>
<gene>
    <name type="primary">idhA</name>
    <name type="synonym">iolG</name>
    <name type="ordered locus">RB1194</name>
    <name type="ORF">SMb20899</name>
</gene>
<protein>
    <recommendedName>
        <fullName>Inositol 2-dehydrogenase</fullName>
        <ecNumber>1.1.1.18</ecNumber>
    </recommendedName>
    <alternativeName>
        <fullName>Myo-inositol 2-dehydrogenase</fullName>
        <shortName>MI-dehydrogenase</shortName>
    </alternativeName>
</protein>
<evidence type="ECO:0000269" key="1">
    <source>
    </source>
</evidence>
<evidence type="ECO:0000305" key="2"/>
<evidence type="ECO:0007829" key="3">
    <source>
        <dbReference type="PDB" id="4HKT"/>
    </source>
</evidence>
<keyword id="KW-0002">3D-structure</keyword>
<keyword id="KW-0520">NAD</keyword>
<keyword id="KW-0560">Oxidoreductase</keyword>
<keyword id="KW-0614">Plasmid</keyword>
<keyword id="KW-1185">Reference proteome</keyword>
<sequence>MTVRFGLLGAGRIGKVHAKAVSGNADARLVAVADAFPAAAEAIAGAYGCEVRTIDAIEAAADIDAVVICTPTDTHADLIERFARAGKAIFCEKPIDLDAERVRACLKVVSDTKAKLMVGFNRRFDPHFMAVRKAIDDGRIGEVEMVTITSRDPSAPPVDYIKRSGGIFRDMTIHDFDMARFLLGEEPVSVTATAAVLIDKAIGDAGDYDSVSVILQTASGKQAIISNSRRATYGYDQRIEVHGSKGAVAAENQRPVSIEIATGDGYTRPPLHDFFMTRYTEAYANEIESFIAAIEKGAEIAPSGNDGLAALALADAAVRSVAEKRQISIA</sequence>
<feature type="chain" id="PRO_0000091775" description="Inositol 2-dehydrogenase">
    <location>
        <begin position="1"/>
        <end position="330"/>
    </location>
</feature>
<feature type="sequence conflict" description="In Ref. 1; AAC70005." evidence="2" ref="1">
    <original>S</original>
    <variation>A</variation>
    <location>
        <position position="226"/>
    </location>
</feature>
<feature type="strand" evidence="3">
    <location>
        <begin position="3"/>
        <end position="8"/>
    </location>
</feature>
<feature type="helix" evidence="3">
    <location>
        <begin position="12"/>
        <end position="23"/>
    </location>
</feature>
<feature type="strand" evidence="3">
    <location>
        <begin position="27"/>
        <end position="33"/>
    </location>
</feature>
<feature type="helix" evidence="3">
    <location>
        <begin position="37"/>
        <end position="46"/>
    </location>
</feature>
<feature type="helix" evidence="3">
    <location>
        <begin position="54"/>
        <end position="59"/>
    </location>
</feature>
<feature type="strand" evidence="3">
    <location>
        <begin position="65"/>
        <end position="68"/>
    </location>
</feature>
<feature type="helix" evidence="3">
    <location>
        <begin position="72"/>
        <end position="74"/>
    </location>
</feature>
<feature type="helix" evidence="3">
    <location>
        <begin position="75"/>
        <end position="84"/>
    </location>
</feature>
<feature type="strand" evidence="3">
    <location>
        <begin position="88"/>
        <end position="91"/>
    </location>
</feature>
<feature type="helix" evidence="3">
    <location>
        <begin position="99"/>
        <end position="111"/>
    </location>
</feature>
<feature type="strand" evidence="3">
    <location>
        <begin position="116"/>
        <end position="118"/>
    </location>
</feature>
<feature type="helix" evidence="3">
    <location>
        <begin position="121"/>
        <end position="124"/>
    </location>
</feature>
<feature type="helix" evidence="3">
    <location>
        <begin position="126"/>
        <end position="136"/>
    </location>
</feature>
<feature type="turn" evidence="3">
    <location>
        <begin position="137"/>
        <end position="140"/>
    </location>
</feature>
<feature type="strand" evidence="3">
    <location>
        <begin position="142"/>
        <end position="151"/>
    </location>
</feature>
<feature type="helix" evidence="3">
    <location>
        <begin position="158"/>
        <end position="162"/>
    </location>
</feature>
<feature type="turn" evidence="3">
    <location>
        <begin position="163"/>
        <end position="165"/>
    </location>
</feature>
<feature type="helix" evidence="3">
    <location>
        <begin position="167"/>
        <end position="170"/>
    </location>
</feature>
<feature type="helix" evidence="3">
    <location>
        <begin position="172"/>
        <end position="183"/>
    </location>
</feature>
<feature type="strand" evidence="3">
    <location>
        <begin position="187"/>
        <end position="195"/>
    </location>
</feature>
<feature type="helix" evidence="3">
    <location>
        <begin position="200"/>
        <end position="204"/>
    </location>
</feature>
<feature type="strand" evidence="3">
    <location>
        <begin position="209"/>
        <end position="217"/>
    </location>
</feature>
<feature type="strand" evidence="3">
    <location>
        <begin position="222"/>
        <end position="229"/>
    </location>
</feature>
<feature type="strand" evidence="3">
    <location>
        <begin position="236"/>
        <end position="245"/>
    </location>
</feature>
<feature type="strand" evidence="3">
    <location>
        <begin position="247"/>
        <end position="250"/>
    </location>
</feature>
<feature type="strand" evidence="3">
    <location>
        <begin position="258"/>
        <end position="262"/>
    </location>
</feature>
<feature type="strand" evidence="3">
    <location>
        <begin position="265"/>
        <end position="268"/>
    </location>
</feature>
<feature type="helix" evidence="3">
    <location>
        <begin position="275"/>
        <end position="278"/>
    </location>
</feature>
<feature type="helix" evidence="3">
    <location>
        <begin position="280"/>
        <end position="295"/>
    </location>
</feature>
<feature type="helix" evidence="3">
    <location>
        <begin position="304"/>
        <end position="323"/>
    </location>
</feature>
<name>MI2D_RHIME</name>
<organism>
    <name type="scientific">Rhizobium meliloti (strain 1021)</name>
    <name type="common">Ensifer meliloti</name>
    <name type="synonym">Sinorhizobium meliloti</name>
    <dbReference type="NCBI Taxonomy" id="266834"/>
    <lineage>
        <taxon>Bacteria</taxon>
        <taxon>Pseudomonadati</taxon>
        <taxon>Pseudomonadota</taxon>
        <taxon>Alphaproteobacteria</taxon>
        <taxon>Hyphomicrobiales</taxon>
        <taxon>Rhizobiaceae</taxon>
        <taxon>Sinorhizobium/Ensifer group</taxon>
        <taxon>Sinorhizobium</taxon>
    </lineage>
</organism>
<accession>O68965</accession>
<dbReference type="EC" id="1.1.1.18"/>
<dbReference type="EMBL" id="AF059313">
    <property type="protein sequence ID" value="AAC70005.1"/>
    <property type="molecule type" value="Genomic_DNA"/>
</dbReference>
<dbReference type="EMBL" id="AL591985">
    <property type="protein sequence ID" value="CAC49594.1"/>
    <property type="molecule type" value="Genomic_DNA"/>
</dbReference>
<dbReference type="PIR" id="B95991">
    <property type="entry name" value="B95991"/>
</dbReference>
<dbReference type="RefSeq" id="NP_437734.1">
    <property type="nucleotide sequence ID" value="NC_003078.1"/>
</dbReference>
<dbReference type="RefSeq" id="WP_010976021.1">
    <property type="nucleotide sequence ID" value="NC_003078.1"/>
</dbReference>
<dbReference type="PDB" id="4HKT">
    <property type="method" value="X-ray"/>
    <property type="resolution" value="2.00 A"/>
    <property type="chains" value="A/B/C/D=1-330"/>
</dbReference>
<dbReference type="PDBsum" id="4HKT"/>
<dbReference type="SMR" id="O68965"/>
<dbReference type="EnsemblBacteria" id="CAC49594">
    <property type="protein sequence ID" value="CAC49594"/>
    <property type="gene ID" value="SM_b20899"/>
</dbReference>
<dbReference type="KEGG" id="sme:SM_b20899"/>
<dbReference type="PATRIC" id="fig|266834.11.peg.6121"/>
<dbReference type="eggNOG" id="COG0673">
    <property type="taxonomic scope" value="Bacteria"/>
</dbReference>
<dbReference type="HOGENOM" id="CLU_023194_0_3_5"/>
<dbReference type="OrthoDB" id="9792935at2"/>
<dbReference type="BRENDA" id="1.1.1.18">
    <property type="organism ID" value="5347"/>
</dbReference>
<dbReference type="UniPathway" id="UPA00076">
    <property type="reaction ID" value="UER00143"/>
</dbReference>
<dbReference type="EvolutionaryTrace" id="O68965"/>
<dbReference type="Proteomes" id="UP000001976">
    <property type="component" value="Plasmid pSymB"/>
</dbReference>
<dbReference type="GO" id="GO:0005737">
    <property type="term" value="C:cytoplasm"/>
    <property type="evidence" value="ECO:0007669"/>
    <property type="project" value="TreeGrafter"/>
</dbReference>
<dbReference type="GO" id="GO:0050112">
    <property type="term" value="F:inositol 2-dehydrogenase (NAD+) activity"/>
    <property type="evidence" value="ECO:0007669"/>
    <property type="project" value="UniProtKB-EC"/>
</dbReference>
<dbReference type="GO" id="GO:0000166">
    <property type="term" value="F:nucleotide binding"/>
    <property type="evidence" value="ECO:0007669"/>
    <property type="project" value="InterPro"/>
</dbReference>
<dbReference type="GO" id="GO:0006740">
    <property type="term" value="P:NADPH regeneration"/>
    <property type="evidence" value="ECO:0007669"/>
    <property type="project" value="TreeGrafter"/>
</dbReference>
<dbReference type="Gene3D" id="3.30.360.10">
    <property type="entry name" value="Dihydrodipicolinate Reductase, domain 2"/>
    <property type="match status" value="1"/>
</dbReference>
<dbReference type="Gene3D" id="3.40.50.720">
    <property type="entry name" value="NAD(P)-binding Rossmann-like Domain"/>
    <property type="match status" value="1"/>
</dbReference>
<dbReference type="InterPro" id="IPR000683">
    <property type="entry name" value="Gfo/Idh/MocA-like_OxRdtase_N"/>
</dbReference>
<dbReference type="InterPro" id="IPR055170">
    <property type="entry name" value="GFO_IDH_MocA-like_dom"/>
</dbReference>
<dbReference type="InterPro" id="IPR030827">
    <property type="entry name" value="Myo_inos_IolG"/>
</dbReference>
<dbReference type="InterPro" id="IPR036291">
    <property type="entry name" value="NAD(P)-bd_dom_sf"/>
</dbReference>
<dbReference type="NCBIfam" id="TIGR04380">
    <property type="entry name" value="myo_inos_iolG"/>
    <property type="match status" value="1"/>
</dbReference>
<dbReference type="PANTHER" id="PTHR42840:SF3">
    <property type="entry name" value="BINDING ROSSMANN FOLD OXIDOREDUCTASE, PUTATIVE (AFU_ORTHOLOGUE AFUA_2G10240)-RELATED"/>
    <property type="match status" value="1"/>
</dbReference>
<dbReference type="PANTHER" id="PTHR42840">
    <property type="entry name" value="NAD(P)-BINDING ROSSMANN-FOLD SUPERFAMILY PROTEIN-RELATED"/>
    <property type="match status" value="1"/>
</dbReference>
<dbReference type="Pfam" id="PF01408">
    <property type="entry name" value="GFO_IDH_MocA"/>
    <property type="match status" value="1"/>
</dbReference>
<dbReference type="Pfam" id="PF22725">
    <property type="entry name" value="GFO_IDH_MocA_C3"/>
    <property type="match status" value="1"/>
</dbReference>
<dbReference type="SUPFAM" id="SSF55347">
    <property type="entry name" value="Glyceraldehyde-3-phosphate dehydrogenase-like, C-terminal domain"/>
    <property type="match status" value="1"/>
</dbReference>
<dbReference type="SUPFAM" id="SSF51735">
    <property type="entry name" value="NAD(P)-binding Rossmann-fold domains"/>
    <property type="match status" value="1"/>
</dbReference>
<geneLocation type="plasmid">
    <name>pSymB</name>
    <name>megaplasmid 2</name>
</geneLocation>
<reference key="1">
    <citation type="journal article" date="1998" name="Microbiology">
        <title>A functional myo-inositol catabolism pathway is essential for rhizopine utilization by Sinorhizobium meliloti.</title>
        <authorList>
            <person name="Galbraith M.P."/>
            <person name="Feng S.F."/>
            <person name="Borneman J."/>
            <person name="Triplett E.W."/>
            <person name="de Bruijn F.J."/>
            <person name="Rossbach S."/>
        </authorList>
    </citation>
    <scope>NUCLEOTIDE SEQUENCE [GENOMIC DNA]</scope>
    <scope>INDUCTION</scope>
    <scope>FUNCTION AS MI-DEHYDROGENASE</scope>
    <source>
        <strain>1021</strain>
    </source>
</reference>
<reference key="2">
    <citation type="journal article" date="2001" name="Proc. Natl. Acad. Sci. U.S.A.">
        <title>The complete sequence of the 1,683-kb pSymB megaplasmid from the N2-fixing endosymbiont Sinorhizobium meliloti.</title>
        <authorList>
            <person name="Finan T.M."/>
            <person name="Weidner S."/>
            <person name="Wong K."/>
            <person name="Buhrmester J."/>
            <person name="Chain P."/>
            <person name="Vorhoelter F.J."/>
            <person name="Hernandez-Lucas I."/>
            <person name="Becker A."/>
            <person name="Cowie A."/>
            <person name="Gouzy J."/>
            <person name="Golding B."/>
            <person name="Puehler A."/>
        </authorList>
    </citation>
    <scope>NUCLEOTIDE SEQUENCE [LARGE SCALE GENOMIC DNA]</scope>
    <source>
        <strain>1021</strain>
    </source>
</reference>
<reference key="3">
    <citation type="journal article" date="2001" name="Science">
        <title>The composite genome of the legume symbiont Sinorhizobium meliloti.</title>
        <authorList>
            <person name="Galibert F."/>
            <person name="Finan T.M."/>
            <person name="Long S.R."/>
            <person name="Puehler A."/>
            <person name="Abola P."/>
            <person name="Ampe F."/>
            <person name="Barloy-Hubler F."/>
            <person name="Barnett M.J."/>
            <person name="Becker A."/>
            <person name="Boistard P."/>
            <person name="Bothe G."/>
            <person name="Boutry M."/>
            <person name="Bowser L."/>
            <person name="Buhrmester J."/>
            <person name="Cadieu E."/>
            <person name="Capela D."/>
            <person name="Chain P."/>
            <person name="Cowie A."/>
            <person name="Davis R.W."/>
            <person name="Dreano S."/>
            <person name="Federspiel N.A."/>
            <person name="Fisher R.F."/>
            <person name="Gloux S."/>
            <person name="Godrie T."/>
            <person name="Goffeau A."/>
            <person name="Golding B."/>
            <person name="Gouzy J."/>
            <person name="Gurjal M."/>
            <person name="Hernandez-Lucas I."/>
            <person name="Hong A."/>
            <person name="Huizar L."/>
            <person name="Hyman R.W."/>
            <person name="Jones T."/>
            <person name="Kahn D."/>
            <person name="Kahn M.L."/>
            <person name="Kalman S."/>
            <person name="Keating D.H."/>
            <person name="Kiss E."/>
            <person name="Komp C."/>
            <person name="Lelaure V."/>
            <person name="Masuy D."/>
            <person name="Palm C."/>
            <person name="Peck M.C."/>
            <person name="Pohl T.M."/>
            <person name="Portetelle D."/>
            <person name="Purnelle B."/>
            <person name="Ramsperger U."/>
            <person name="Surzycki R."/>
            <person name="Thebault P."/>
            <person name="Vandenbol M."/>
            <person name="Vorhoelter F.J."/>
            <person name="Weidner S."/>
            <person name="Wells D.H."/>
            <person name="Wong K."/>
            <person name="Yeh K.-C."/>
            <person name="Batut J."/>
        </authorList>
    </citation>
    <scope>NUCLEOTIDE SEQUENCE [LARGE SCALE GENOMIC DNA]</scope>
    <source>
        <strain>1021</strain>
    </source>
</reference>
<proteinExistence type="evidence at protein level"/>